<comment type="function">
    <text evidence="1">Channel that opens in response to stretch forces in the membrane lipid bilayer. May participate in the regulation of osmotic pressure changes within the cell.</text>
</comment>
<comment type="subunit">
    <text evidence="1">Homopentamer.</text>
</comment>
<comment type="subcellular location">
    <subcellularLocation>
        <location evidence="1">Cell inner membrane</location>
        <topology evidence="1">Multi-pass membrane protein</topology>
    </subcellularLocation>
</comment>
<comment type="similarity">
    <text evidence="1">Belongs to the MscL family.</text>
</comment>
<proteinExistence type="inferred from homology"/>
<feature type="chain" id="PRO_0000238045" description="Large-conductance mechanosensitive channel">
    <location>
        <begin position="1"/>
        <end position="133"/>
    </location>
</feature>
<feature type="transmembrane region" description="Helical" evidence="1">
    <location>
        <begin position="17"/>
        <end position="37"/>
    </location>
</feature>
<feature type="transmembrane region" description="Helical" evidence="1">
    <location>
        <begin position="73"/>
        <end position="93"/>
    </location>
</feature>
<name>MSCL_SYNP6</name>
<reference key="1">
    <citation type="journal article" date="2007" name="Photosyn. Res.">
        <title>Complete nucleotide sequence of the freshwater unicellular cyanobacterium Synechococcus elongatus PCC 6301 chromosome: gene content and organization.</title>
        <authorList>
            <person name="Sugita C."/>
            <person name="Ogata K."/>
            <person name="Shikata M."/>
            <person name="Jikuya H."/>
            <person name="Takano J."/>
            <person name="Furumichi M."/>
            <person name="Kanehisa M."/>
            <person name="Omata T."/>
            <person name="Sugiura M."/>
            <person name="Sugita M."/>
        </authorList>
    </citation>
    <scope>NUCLEOTIDE SEQUENCE [LARGE SCALE GENOMIC DNA]</scope>
    <source>
        <strain>ATCC 27144 / PCC 6301 / SAUG 1402/1</strain>
    </source>
</reference>
<keyword id="KW-0997">Cell inner membrane</keyword>
<keyword id="KW-1003">Cell membrane</keyword>
<keyword id="KW-0407">Ion channel</keyword>
<keyword id="KW-0406">Ion transport</keyword>
<keyword id="KW-0472">Membrane</keyword>
<keyword id="KW-0812">Transmembrane</keyword>
<keyword id="KW-1133">Transmembrane helix</keyword>
<keyword id="KW-0813">Transport</keyword>
<dbReference type="EMBL" id="AP008231">
    <property type="protein sequence ID" value="BAD80295.1"/>
    <property type="molecule type" value="Genomic_DNA"/>
</dbReference>
<dbReference type="RefSeq" id="WP_011244415.1">
    <property type="nucleotide sequence ID" value="NZ_CP085785.1"/>
</dbReference>
<dbReference type="SMR" id="Q5N075"/>
<dbReference type="TCDB" id="1.A.22.1.7">
    <property type="family name" value="the large conductance mechanosensitive ion channel (mscl) family"/>
</dbReference>
<dbReference type="GeneID" id="72430864"/>
<dbReference type="KEGG" id="syc:syc2105_d"/>
<dbReference type="eggNOG" id="COG1970">
    <property type="taxonomic scope" value="Bacteria"/>
</dbReference>
<dbReference type="Proteomes" id="UP000001175">
    <property type="component" value="Chromosome"/>
</dbReference>
<dbReference type="GO" id="GO:0005886">
    <property type="term" value="C:plasma membrane"/>
    <property type="evidence" value="ECO:0007669"/>
    <property type="project" value="UniProtKB-SubCell"/>
</dbReference>
<dbReference type="GO" id="GO:0008381">
    <property type="term" value="F:mechanosensitive monoatomic ion channel activity"/>
    <property type="evidence" value="ECO:0007669"/>
    <property type="project" value="UniProtKB-UniRule"/>
</dbReference>
<dbReference type="Gene3D" id="1.10.1200.120">
    <property type="entry name" value="Large-conductance mechanosensitive channel, MscL, domain 1"/>
    <property type="match status" value="1"/>
</dbReference>
<dbReference type="HAMAP" id="MF_00115">
    <property type="entry name" value="MscL"/>
    <property type="match status" value="1"/>
</dbReference>
<dbReference type="InterPro" id="IPR001185">
    <property type="entry name" value="MS_channel"/>
</dbReference>
<dbReference type="InterPro" id="IPR037673">
    <property type="entry name" value="MSC/AndL"/>
</dbReference>
<dbReference type="InterPro" id="IPR036019">
    <property type="entry name" value="MscL_channel"/>
</dbReference>
<dbReference type="NCBIfam" id="TIGR00220">
    <property type="entry name" value="mscL"/>
    <property type="match status" value="1"/>
</dbReference>
<dbReference type="PANTHER" id="PTHR30266:SF2">
    <property type="entry name" value="LARGE-CONDUCTANCE MECHANOSENSITIVE CHANNEL"/>
    <property type="match status" value="1"/>
</dbReference>
<dbReference type="PANTHER" id="PTHR30266">
    <property type="entry name" value="MECHANOSENSITIVE CHANNEL MSCL"/>
    <property type="match status" value="1"/>
</dbReference>
<dbReference type="Pfam" id="PF01741">
    <property type="entry name" value="MscL"/>
    <property type="match status" value="1"/>
</dbReference>
<dbReference type="PRINTS" id="PR01264">
    <property type="entry name" value="MECHCHANNEL"/>
</dbReference>
<dbReference type="SUPFAM" id="SSF81330">
    <property type="entry name" value="Gated mechanosensitive channel"/>
    <property type="match status" value="1"/>
</dbReference>
<sequence>MTSRRGRAVGFIRDFQAFILKGNVVELAVAVIIGGAFNKIVSSFVGDLVMPLVNPLIPGGDWRTAVIGPGLKIGSFAGSVIDFLIIAFVLYLAIRAIERFKRKEEAVVAAAEPDVQQQMLATLERIADNLEAR</sequence>
<protein>
    <recommendedName>
        <fullName evidence="1">Large-conductance mechanosensitive channel</fullName>
    </recommendedName>
</protein>
<gene>
    <name evidence="1" type="primary">mscL</name>
    <name type="ordered locus">syc2105_d</name>
</gene>
<accession>Q5N075</accession>
<organism>
    <name type="scientific">Synechococcus sp. (strain ATCC 27144 / PCC 6301 / SAUG 1402/1)</name>
    <name type="common">Anacystis nidulans</name>
    <dbReference type="NCBI Taxonomy" id="269084"/>
    <lineage>
        <taxon>Bacteria</taxon>
        <taxon>Bacillati</taxon>
        <taxon>Cyanobacteriota</taxon>
        <taxon>Cyanophyceae</taxon>
        <taxon>Synechococcales</taxon>
        <taxon>Synechococcaceae</taxon>
        <taxon>Synechococcus</taxon>
    </lineage>
</organism>
<evidence type="ECO:0000255" key="1">
    <source>
        <dbReference type="HAMAP-Rule" id="MF_00115"/>
    </source>
</evidence>